<comment type="function">
    <text>This toxin kills sensitive strains of yeast.</text>
</comment>
<comment type="subunit">
    <text evidence="1">Monomer.</text>
</comment>
<comment type="subcellular location">
    <subcellularLocation>
        <location evidence="1">Secreted</location>
    </subcellularLocation>
</comment>
<organism>
    <name type="scientific">Cyberlindnera saturnus</name>
    <name type="common">Yeast</name>
    <name type="synonym">Williopsis saturnus</name>
    <dbReference type="NCBI Taxonomy" id="907340"/>
    <lineage>
        <taxon>Eukaryota</taxon>
        <taxon>Fungi</taxon>
        <taxon>Dikarya</taxon>
        <taxon>Ascomycota</taxon>
        <taxon>Saccharomycotina</taxon>
        <taxon>Saccharomycetes</taxon>
        <taxon>Phaffomycetales</taxon>
        <taxon>Phaffomycetaceae</taxon>
        <taxon>Cyberlindnera</taxon>
    </lineage>
</organism>
<dbReference type="EMBL" id="D13446">
    <property type="protein sequence ID" value="BAA02705.1"/>
    <property type="molecule type" value="Genomic_DNA"/>
</dbReference>
<dbReference type="SMR" id="Q00948"/>
<dbReference type="GO" id="GO:0005576">
    <property type="term" value="C:extracellular region"/>
    <property type="evidence" value="ECO:0007669"/>
    <property type="project" value="UniProtKB-SubCell"/>
</dbReference>
<dbReference type="GO" id="GO:0090729">
    <property type="term" value="F:toxin activity"/>
    <property type="evidence" value="ECO:0007669"/>
    <property type="project" value="UniProtKB-KW"/>
</dbReference>
<dbReference type="Gene3D" id="2.60.20.20">
    <property type="match status" value="1"/>
</dbReference>
<dbReference type="InterPro" id="IPR011024">
    <property type="entry name" value="G_crystallin-like"/>
</dbReference>
<dbReference type="InterPro" id="IPR015290">
    <property type="entry name" value="Yeast-kill-tox"/>
</dbReference>
<dbReference type="InterPro" id="IPR038651">
    <property type="entry name" value="Yeast_kill_tox_sf"/>
</dbReference>
<dbReference type="Pfam" id="PF09207">
    <property type="entry name" value="Yeast-kill-tox"/>
    <property type="match status" value="1"/>
</dbReference>
<dbReference type="SUPFAM" id="SSF49695">
    <property type="entry name" value="gamma-Crystallin-like"/>
    <property type="match status" value="1"/>
</dbReference>
<proteinExistence type="inferred from homology"/>
<feature type="signal peptide" evidence="2">
    <location>
        <begin position="1"/>
        <end position="19"/>
    </location>
</feature>
<feature type="propeptide" id="PRO_0000022570" evidence="1">
    <location>
        <begin position="20"/>
        <end position="37"/>
    </location>
</feature>
<feature type="chain" id="PRO_0000022571" description="Killer toxin">
    <location>
        <begin position="38"/>
        <end position="124"/>
    </location>
</feature>
<feature type="disulfide bond" evidence="1">
    <location>
        <begin position="45"/>
        <end position="55"/>
    </location>
</feature>
<feature type="disulfide bond" evidence="1">
    <location>
        <begin position="48"/>
        <end position="108"/>
    </location>
</feature>
<feature type="disulfide bond" evidence="1">
    <location>
        <begin position="64"/>
        <end position="94"/>
    </location>
</feature>
<feature type="disulfide bond" evidence="1">
    <location>
        <begin position="85"/>
        <end position="102"/>
    </location>
</feature>
<feature type="disulfide bond" evidence="1">
    <location>
        <begin position="103"/>
        <end position="109"/>
    </location>
</feature>
<name>TOXK_CYBSA</name>
<accession>Q00948</accession>
<evidence type="ECO:0000250" key="1"/>
<evidence type="ECO:0000255" key="2"/>
<protein>
    <recommendedName>
        <fullName>Killer toxin</fullName>
    </recommendedName>
</protein>
<gene>
    <name type="primary">HSK</name>
</gene>
<keyword id="KW-0165">Cleavage on pair of basic residues</keyword>
<keyword id="KW-1015">Disulfide bond</keyword>
<keyword id="KW-0964">Secreted</keyword>
<keyword id="KW-0732">Signal</keyword>
<keyword id="KW-0800">Toxin</keyword>
<sequence length="124" mass="13347">MKVSLVYGLTCFLDATSSALPSAMAAANSESSALEKRNDGYLVMCKNCDPNSGSCDWKQNWNTCVGIGSNVHWMVTGESNGQQGCAIIWEGSGCTGRSTTMCCPGDTCCNINTGFYIRSYRRVE</sequence>
<reference key="1">
    <citation type="journal article" date="1993" name="Gene">
        <title>Isolation and nucleotide sequences of the genes encoding killer toxins from Hansenula mrakii and H. saturnus.</title>
        <authorList>
            <person name="Kimura T."/>
            <person name="Kitamoto N."/>
            <person name="Matsuoka K."/>
            <person name="Nakamura K."/>
            <person name="Iimura Y."/>
            <person name="Kito Y."/>
        </authorList>
    </citation>
    <scope>NUCLEOTIDE SEQUENCE [GENOMIC DNA]</scope>
    <source>
        <strain>NBRC 0117 / IAM 12217 / JCM 3623 / NCYC 23</strain>
    </source>
</reference>